<dbReference type="EMBL" id="AP009247">
    <property type="protein sequence ID" value="BAF61303.1"/>
    <property type="molecule type" value="Genomic_DNA"/>
</dbReference>
<dbReference type="RefSeq" id="WP_011929573.1">
    <property type="nucleotide sequence ID" value="NC_009465.1"/>
</dbReference>
<dbReference type="SMR" id="A5CXK8"/>
<dbReference type="STRING" id="412965.COSY_0173"/>
<dbReference type="KEGG" id="vok:COSY_0173"/>
<dbReference type="eggNOG" id="COG0185">
    <property type="taxonomic scope" value="Bacteria"/>
</dbReference>
<dbReference type="HOGENOM" id="CLU_144911_0_1_6"/>
<dbReference type="OrthoDB" id="9797833at2"/>
<dbReference type="Proteomes" id="UP000000247">
    <property type="component" value="Chromosome"/>
</dbReference>
<dbReference type="GO" id="GO:0005737">
    <property type="term" value="C:cytoplasm"/>
    <property type="evidence" value="ECO:0007669"/>
    <property type="project" value="UniProtKB-ARBA"/>
</dbReference>
<dbReference type="GO" id="GO:0015935">
    <property type="term" value="C:small ribosomal subunit"/>
    <property type="evidence" value="ECO:0007669"/>
    <property type="project" value="InterPro"/>
</dbReference>
<dbReference type="GO" id="GO:0019843">
    <property type="term" value="F:rRNA binding"/>
    <property type="evidence" value="ECO:0007669"/>
    <property type="project" value="UniProtKB-UniRule"/>
</dbReference>
<dbReference type="GO" id="GO:0003735">
    <property type="term" value="F:structural constituent of ribosome"/>
    <property type="evidence" value="ECO:0007669"/>
    <property type="project" value="InterPro"/>
</dbReference>
<dbReference type="GO" id="GO:0000028">
    <property type="term" value="P:ribosomal small subunit assembly"/>
    <property type="evidence" value="ECO:0007669"/>
    <property type="project" value="TreeGrafter"/>
</dbReference>
<dbReference type="GO" id="GO:0006412">
    <property type="term" value="P:translation"/>
    <property type="evidence" value="ECO:0007669"/>
    <property type="project" value="UniProtKB-UniRule"/>
</dbReference>
<dbReference type="FunFam" id="3.30.860.10:FF:000001">
    <property type="entry name" value="30S ribosomal protein S19"/>
    <property type="match status" value="1"/>
</dbReference>
<dbReference type="Gene3D" id="3.30.860.10">
    <property type="entry name" value="30s Ribosomal Protein S19, Chain A"/>
    <property type="match status" value="1"/>
</dbReference>
<dbReference type="HAMAP" id="MF_00531">
    <property type="entry name" value="Ribosomal_uS19"/>
    <property type="match status" value="1"/>
</dbReference>
<dbReference type="InterPro" id="IPR002222">
    <property type="entry name" value="Ribosomal_uS19"/>
</dbReference>
<dbReference type="InterPro" id="IPR005732">
    <property type="entry name" value="Ribosomal_uS19_bac-type"/>
</dbReference>
<dbReference type="InterPro" id="IPR020934">
    <property type="entry name" value="Ribosomal_uS19_CS"/>
</dbReference>
<dbReference type="InterPro" id="IPR023575">
    <property type="entry name" value="Ribosomal_uS19_SF"/>
</dbReference>
<dbReference type="NCBIfam" id="TIGR01050">
    <property type="entry name" value="rpsS_bact"/>
    <property type="match status" value="1"/>
</dbReference>
<dbReference type="PANTHER" id="PTHR11880">
    <property type="entry name" value="RIBOSOMAL PROTEIN S19P FAMILY MEMBER"/>
    <property type="match status" value="1"/>
</dbReference>
<dbReference type="PANTHER" id="PTHR11880:SF8">
    <property type="entry name" value="SMALL RIBOSOMAL SUBUNIT PROTEIN US19M"/>
    <property type="match status" value="1"/>
</dbReference>
<dbReference type="Pfam" id="PF00203">
    <property type="entry name" value="Ribosomal_S19"/>
    <property type="match status" value="1"/>
</dbReference>
<dbReference type="PIRSF" id="PIRSF002144">
    <property type="entry name" value="Ribosomal_S19"/>
    <property type="match status" value="1"/>
</dbReference>
<dbReference type="PRINTS" id="PR00975">
    <property type="entry name" value="RIBOSOMALS19"/>
</dbReference>
<dbReference type="SUPFAM" id="SSF54570">
    <property type="entry name" value="Ribosomal protein S19"/>
    <property type="match status" value="1"/>
</dbReference>
<dbReference type="PROSITE" id="PS00323">
    <property type="entry name" value="RIBOSOMAL_S19"/>
    <property type="match status" value="1"/>
</dbReference>
<keyword id="KW-1185">Reference proteome</keyword>
<keyword id="KW-0687">Ribonucleoprotein</keyword>
<keyword id="KW-0689">Ribosomal protein</keyword>
<keyword id="KW-0694">RNA-binding</keyword>
<keyword id="KW-0699">rRNA-binding</keyword>
<name>RS19_VESOH</name>
<proteinExistence type="inferred from homology"/>
<evidence type="ECO:0000255" key="1">
    <source>
        <dbReference type="HAMAP-Rule" id="MF_00531"/>
    </source>
</evidence>
<evidence type="ECO:0000305" key="2"/>
<accession>A5CXK8</accession>
<organism>
    <name type="scientific">Vesicomyosocius okutanii subsp. Calyptogena okutanii (strain HA)</name>
    <dbReference type="NCBI Taxonomy" id="412965"/>
    <lineage>
        <taxon>Bacteria</taxon>
        <taxon>Pseudomonadati</taxon>
        <taxon>Pseudomonadota</taxon>
        <taxon>Gammaproteobacteria</taxon>
        <taxon>Candidatus Pseudothioglobaceae</taxon>
        <taxon>Candidatus Vesicomyosocius</taxon>
    </lineage>
</organism>
<feature type="chain" id="PRO_1000051143" description="Small ribosomal subunit protein uS19">
    <location>
        <begin position="1"/>
        <end position="89"/>
    </location>
</feature>
<comment type="function">
    <text evidence="1">Protein S19 forms a complex with S13 that binds strongly to the 16S ribosomal RNA.</text>
</comment>
<comment type="similarity">
    <text evidence="1">Belongs to the universal ribosomal protein uS19 family.</text>
</comment>
<sequence length="89" mass="9968">MARSLRKGPFVDEHLIKKVLAAQGNNDRKPIKTWSRRSVVVPEMIGLTIAVHNGRVHVPVSINENMVGHKLGEFAITRTFKGHFGDRKA</sequence>
<gene>
    <name evidence="1" type="primary">rpsS</name>
    <name type="ordered locus">COSY_0173</name>
</gene>
<reference key="1">
    <citation type="journal article" date="2007" name="Curr. Biol.">
        <title>Reduced genome of the thioautotrophic intracellular symbiont in a deep-sea clam, Calyptogena okutanii.</title>
        <authorList>
            <person name="Kuwahara H."/>
            <person name="Yoshida T."/>
            <person name="Takaki Y."/>
            <person name="Shimamura S."/>
            <person name="Nishi S."/>
            <person name="Harada M."/>
            <person name="Matsuyama K."/>
            <person name="Takishita K."/>
            <person name="Kawato M."/>
            <person name="Uematsu K."/>
            <person name="Fujiwara Y."/>
            <person name="Sato T."/>
            <person name="Kato C."/>
            <person name="Kitagawa M."/>
            <person name="Kato I."/>
            <person name="Maruyama T."/>
        </authorList>
    </citation>
    <scope>NUCLEOTIDE SEQUENCE [LARGE SCALE GENOMIC DNA]</scope>
    <source>
        <strain>HA</strain>
    </source>
</reference>
<protein>
    <recommendedName>
        <fullName evidence="1">Small ribosomal subunit protein uS19</fullName>
    </recommendedName>
    <alternativeName>
        <fullName evidence="2">30S ribosomal protein S19</fullName>
    </alternativeName>
</protein>